<evidence type="ECO:0000255" key="1">
    <source>
        <dbReference type="HAMAP-Rule" id="MF_01666"/>
    </source>
</evidence>
<sequence>MDIIFYHPTFDTQWWIEALRKAIPQARVRAWKSGDNDSADYALVWHPPVEMLAGRDLKAVFALGAGVDSILSKLQAHPEMLNPSVPLFRLEDTGMGEQMQEYAVSQVLHWFRRFDDYRIQQNSSHWQPLPEYHREDFTIGILGAGVLGSKVAQSLQTWRFPLRCWSRTRKSWPGVQSFAGREELSAFLSQCRVLINLLPNTPETVGIINQQLLEKLPDGAYLLNLARGVHVVEDDLLAALDSGKVKGAMLDVFNREPLPPENPLWQHPRVTITPHVAAITRPAEAVEYISRTIAQLEKGERVCGQVDRARGY</sequence>
<organism>
    <name type="scientific">Escherichia coli (strain 55989 / EAEC)</name>
    <dbReference type="NCBI Taxonomy" id="585055"/>
    <lineage>
        <taxon>Bacteria</taxon>
        <taxon>Pseudomonadati</taxon>
        <taxon>Pseudomonadota</taxon>
        <taxon>Gammaproteobacteria</taxon>
        <taxon>Enterobacterales</taxon>
        <taxon>Enterobacteriaceae</taxon>
        <taxon>Escherichia</taxon>
    </lineage>
</organism>
<protein>
    <recommendedName>
        <fullName evidence="1">Glyoxylate/hydroxypyruvate reductase A</fullName>
        <ecNumber evidence="1">1.1.1.79</ecNumber>
        <ecNumber evidence="1">1.1.1.81</ecNumber>
    </recommendedName>
    <alternativeName>
        <fullName evidence="1">2-ketoacid reductase</fullName>
    </alternativeName>
</protein>
<feature type="chain" id="PRO_1000187264" description="Glyoxylate/hydroxypyruvate reductase A">
    <location>
        <begin position="1"/>
        <end position="312"/>
    </location>
</feature>
<feature type="active site" evidence="1">
    <location>
        <position position="227"/>
    </location>
</feature>
<feature type="active site" description="Proton donor" evidence="1">
    <location>
        <position position="275"/>
    </location>
</feature>
<reference key="1">
    <citation type="journal article" date="2009" name="PLoS Genet.">
        <title>Organised genome dynamics in the Escherichia coli species results in highly diverse adaptive paths.</title>
        <authorList>
            <person name="Touchon M."/>
            <person name="Hoede C."/>
            <person name="Tenaillon O."/>
            <person name="Barbe V."/>
            <person name="Baeriswyl S."/>
            <person name="Bidet P."/>
            <person name="Bingen E."/>
            <person name="Bonacorsi S."/>
            <person name="Bouchier C."/>
            <person name="Bouvet O."/>
            <person name="Calteau A."/>
            <person name="Chiapello H."/>
            <person name="Clermont O."/>
            <person name="Cruveiller S."/>
            <person name="Danchin A."/>
            <person name="Diard M."/>
            <person name="Dossat C."/>
            <person name="Karoui M.E."/>
            <person name="Frapy E."/>
            <person name="Garry L."/>
            <person name="Ghigo J.M."/>
            <person name="Gilles A.M."/>
            <person name="Johnson J."/>
            <person name="Le Bouguenec C."/>
            <person name="Lescat M."/>
            <person name="Mangenot S."/>
            <person name="Martinez-Jehanne V."/>
            <person name="Matic I."/>
            <person name="Nassif X."/>
            <person name="Oztas S."/>
            <person name="Petit M.A."/>
            <person name="Pichon C."/>
            <person name="Rouy Z."/>
            <person name="Ruf C.S."/>
            <person name="Schneider D."/>
            <person name="Tourret J."/>
            <person name="Vacherie B."/>
            <person name="Vallenet D."/>
            <person name="Medigue C."/>
            <person name="Rocha E.P.C."/>
            <person name="Denamur E."/>
        </authorList>
    </citation>
    <scope>NUCLEOTIDE SEQUENCE [LARGE SCALE GENOMIC DNA]</scope>
    <source>
        <strain>55989 / EAEC</strain>
    </source>
</reference>
<name>GHRA_ECO55</name>
<gene>
    <name evidence="1" type="primary">ghrA</name>
    <name type="ordered locus">EC55989_1146</name>
</gene>
<dbReference type="EC" id="1.1.1.79" evidence="1"/>
<dbReference type="EC" id="1.1.1.81" evidence="1"/>
<dbReference type="EMBL" id="CU928145">
    <property type="protein sequence ID" value="CAU97005.1"/>
    <property type="molecule type" value="Genomic_DNA"/>
</dbReference>
<dbReference type="RefSeq" id="WP_000351313.1">
    <property type="nucleotide sequence ID" value="NC_011748.1"/>
</dbReference>
<dbReference type="SMR" id="B7LFE3"/>
<dbReference type="KEGG" id="eck:EC55989_1146"/>
<dbReference type="HOGENOM" id="CLU_019796_1_0_6"/>
<dbReference type="Proteomes" id="UP000000746">
    <property type="component" value="Chromosome"/>
</dbReference>
<dbReference type="GO" id="GO:0005829">
    <property type="term" value="C:cytosol"/>
    <property type="evidence" value="ECO:0007669"/>
    <property type="project" value="UniProtKB-ARBA"/>
</dbReference>
<dbReference type="GO" id="GO:0030267">
    <property type="term" value="F:glyoxylate reductase (NADPH) activity"/>
    <property type="evidence" value="ECO:0007669"/>
    <property type="project" value="UniProtKB-UniRule"/>
</dbReference>
<dbReference type="GO" id="GO:0008465">
    <property type="term" value="F:hydroxypyruvate reductase (NADH) activity"/>
    <property type="evidence" value="ECO:0007669"/>
    <property type="project" value="RHEA"/>
</dbReference>
<dbReference type="GO" id="GO:0120509">
    <property type="term" value="F:hydroxypyruvate reductase (NADPH) activity"/>
    <property type="evidence" value="ECO:0007669"/>
    <property type="project" value="RHEA"/>
</dbReference>
<dbReference type="GO" id="GO:0051287">
    <property type="term" value="F:NAD binding"/>
    <property type="evidence" value="ECO:0007669"/>
    <property type="project" value="InterPro"/>
</dbReference>
<dbReference type="CDD" id="cd12164">
    <property type="entry name" value="GDH_like_2"/>
    <property type="match status" value="1"/>
</dbReference>
<dbReference type="FunFam" id="3.40.50.720:FF:000110">
    <property type="entry name" value="Glyoxylate/hydroxypyruvate reductase A"/>
    <property type="match status" value="1"/>
</dbReference>
<dbReference type="Gene3D" id="3.40.50.720">
    <property type="entry name" value="NAD(P)-binding Rossmann-like Domain"/>
    <property type="match status" value="2"/>
</dbReference>
<dbReference type="HAMAP" id="MF_01666">
    <property type="entry name" value="2_Hacid_dh_C_GhrA"/>
    <property type="match status" value="1"/>
</dbReference>
<dbReference type="InterPro" id="IPR029753">
    <property type="entry name" value="D-isomer_DH_CS"/>
</dbReference>
<dbReference type="InterPro" id="IPR006140">
    <property type="entry name" value="D-isomer_DH_NAD-bd"/>
</dbReference>
<dbReference type="InterPro" id="IPR023514">
    <property type="entry name" value="GhrA_Enterobacterales"/>
</dbReference>
<dbReference type="InterPro" id="IPR036291">
    <property type="entry name" value="NAD(P)-bd_dom_sf"/>
</dbReference>
<dbReference type="NCBIfam" id="NF012013">
    <property type="entry name" value="PRK15469.1"/>
    <property type="match status" value="1"/>
</dbReference>
<dbReference type="PANTHER" id="PTHR43333">
    <property type="entry name" value="2-HACID_DH_C DOMAIN-CONTAINING PROTEIN"/>
    <property type="match status" value="1"/>
</dbReference>
<dbReference type="PANTHER" id="PTHR43333:SF1">
    <property type="entry name" value="D-ISOMER SPECIFIC 2-HYDROXYACID DEHYDROGENASE NAD-BINDING DOMAIN-CONTAINING PROTEIN"/>
    <property type="match status" value="1"/>
</dbReference>
<dbReference type="Pfam" id="PF02826">
    <property type="entry name" value="2-Hacid_dh_C"/>
    <property type="match status" value="1"/>
</dbReference>
<dbReference type="SUPFAM" id="SSF51735">
    <property type="entry name" value="NAD(P)-binding Rossmann-fold domains"/>
    <property type="match status" value="1"/>
</dbReference>
<dbReference type="PROSITE" id="PS00671">
    <property type="entry name" value="D_2_HYDROXYACID_DH_3"/>
    <property type="match status" value="1"/>
</dbReference>
<proteinExistence type="inferred from homology"/>
<accession>B7LFE3</accession>
<comment type="function">
    <text evidence="1">Catalyzes the NADPH-dependent reduction of glyoxylate and hydroxypyruvate into glycolate and glycerate, respectively.</text>
</comment>
<comment type="catalytic activity">
    <reaction evidence="1">
        <text>glycolate + NADP(+) = glyoxylate + NADPH + H(+)</text>
        <dbReference type="Rhea" id="RHEA:10992"/>
        <dbReference type="ChEBI" id="CHEBI:15378"/>
        <dbReference type="ChEBI" id="CHEBI:29805"/>
        <dbReference type="ChEBI" id="CHEBI:36655"/>
        <dbReference type="ChEBI" id="CHEBI:57783"/>
        <dbReference type="ChEBI" id="CHEBI:58349"/>
        <dbReference type="EC" id="1.1.1.79"/>
    </reaction>
</comment>
<comment type="catalytic activity">
    <reaction evidence="1">
        <text>(R)-glycerate + NAD(+) = 3-hydroxypyruvate + NADH + H(+)</text>
        <dbReference type="Rhea" id="RHEA:17905"/>
        <dbReference type="ChEBI" id="CHEBI:15378"/>
        <dbReference type="ChEBI" id="CHEBI:16659"/>
        <dbReference type="ChEBI" id="CHEBI:17180"/>
        <dbReference type="ChEBI" id="CHEBI:57540"/>
        <dbReference type="ChEBI" id="CHEBI:57945"/>
        <dbReference type="EC" id="1.1.1.81"/>
    </reaction>
</comment>
<comment type="catalytic activity">
    <reaction evidence="1">
        <text>(R)-glycerate + NADP(+) = 3-hydroxypyruvate + NADPH + H(+)</text>
        <dbReference type="Rhea" id="RHEA:18657"/>
        <dbReference type="ChEBI" id="CHEBI:15378"/>
        <dbReference type="ChEBI" id="CHEBI:16659"/>
        <dbReference type="ChEBI" id="CHEBI:17180"/>
        <dbReference type="ChEBI" id="CHEBI:57783"/>
        <dbReference type="ChEBI" id="CHEBI:58349"/>
        <dbReference type="EC" id="1.1.1.81"/>
    </reaction>
</comment>
<comment type="subcellular location">
    <subcellularLocation>
        <location evidence="1">Cytoplasm</location>
    </subcellularLocation>
</comment>
<comment type="similarity">
    <text evidence="1">Belongs to the D-isomer specific 2-hydroxyacid dehydrogenase family. GhrA subfamily.</text>
</comment>
<keyword id="KW-0963">Cytoplasm</keyword>
<keyword id="KW-0520">NAD</keyword>
<keyword id="KW-0521">NADP</keyword>
<keyword id="KW-0560">Oxidoreductase</keyword>
<keyword id="KW-1185">Reference proteome</keyword>